<proteinExistence type="evidence at transcript level"/>
<gene>
    <name type="primary">KIF3C</name>
</gene>
<comment type="function">
    <text evidence="1">Microtubule-based anterograde translocator for membranous organelles.</text>
</comment>
<comment type="subunit">
    <text evidence="1">Heterodimer of KIF3A and KIF3C.</text>
</comment>
<comment type="subcellular location">
    <subcellularLocation>
        <location evidence="5">Cytoplasm</location>
        <location evidence="5">Cytoskeleton</location>
    </subcellularLocation>
</comment>
<comment type="similarity">
    <text evidence="3">Belongs to the TRAFAC class myosin-kinesin ATPase superfamily. Kinesin family. Kinesin II subfamily.</text>
</comment>
<keyword id="KW-0067">ATP-binding</keyword>
<keyword id="KW-0175">Coiled coil</keyword>
<keyword id="KW-0963">Cytoplasm</keyword>
<keyword id="KW-0206">Cytoskeleton</keyword>
<keyword id="KW-0493">Microtubule</keyword>
<keyword id="KW-0505">Motor protein</keyword>
<keyword id="KW-0547">Nucleotide-binding</keyword>
<keyword id="KW-1185">Reference proteome</keyword>
<reference key="1">
    <citation type="submission" date="2004-11" db="EMBL/GenBank/DDBJ databases">
        <authorList>
            <consortium name="The German cDNA consortium"/>
        </authorList>
    </citation>
    <scope>NUCLEOTIDE SEQUENCE [LARGE SCALE MRNA]</scope>
    <source>
        <tissue>Brain cortex</tissue>
    </source>
</reference>
<organism>
    <name type="scientific">Pongo abelii</name>
    <name type="common">Sumatran orangutan</name>
    <name type="synonym">Pongo pygmaeus abelii</name>
    <dbReference type="NCBI Taxonomy" id="9601"/>
    <lineage>
        <taxon>Eukaryota</taxon>
        <taxon>Metazoa</taxon>
        <taxon>Chordata</taxon>
        <taxon>Craniata</taxon>
        <taxon>Vertebrata</taxon>
        <taxon>Euteleostomi</taxon>
        <taxon>Mammalia</taxon>
        <taxon>Eutheria</taxon>
        <taxon>Euarchontoglires</taxon>
        <taxon>Primates</taxon>
        <taxon>Haplorrhini</taxon>
        <taxon>Catarrhini</taxon>
        <taxon>Hominidae</taxon>
        <taxon>Pongo</taxon>
    </lineage>
</organism>
<dbReference type="EMBL" id="CR860317">
    <property type="protein sequence ID" value="CAH92454.1"/>
    <property type="molecule type" value="mRNA"/>
</dbReference>
<dbReference type="RefSeq" id="NP_001124561.1">
    <property type="nucleotide sequence ID" value="NM_001131089.1"/>
</dbReference>
<dbReference type="SMR" id="Q5R706"/>
<dbReference type="FunCoup" id="Q5R706">
    <property type="interactions" value="187"/>
</dbReference>
<dbReference type="STRING" id="9601.ENSPPYP00000014056"/>
<dbReference type="GeneID" id="100169734"/>
<dbReference type="KEGG" id="pon:100169734"/>
<dbReference type="CTD" id="3797"/>
<dbReference type="eggNOG" id="KOG4280">
    <property type="taxonomic scope" value="Eukaryota"/>
</dbReference>
<dbReference type="InParanoid" id="Q5R706"/>
<dbReference type="OrthoDB" id="3176171at2759"/>
<dbReference type="Proteomes" id="UP000001595">
    <property type="component" value="Unplaced"/>
</dbReference>
<dbReference type="GO" id="GO:0005737">
    <property type="term" value="C:cytoplasm"/>
    <property type="evidence" value="ECO:0007669"/>
    <property type="project" value="UniProtKB-KW"/>
</dbReference>
<dbReference type="GO" id="GO:0005874">
    <property type="term" value="C:microtubule"/>
    <property type="evidence" value="ECO:0007669"/>
    <property type="project" value="UniProtKB-KW"/>
</dbReference>
<dbReference type="GO" id="GO:0005524">
    <property type="term" value="F:ATP binding"/>
    <property type="evidence" value="ECO:0007669"/>
    <property type="project" value="UniProtKB-KW"/>
</dbReference>
<dbReference type="GO" id="GO:0008017">
    <property type="term" value="F:microtubule binding"/>
    <property type="evidence" value="ECO:0007669"/>
    <property type="project" value="InterPro"/>
</dbReference>
<dbReference type="GO" id="GO:0003777">
    <property type="term" value="F:microtubule motor activity"/>
    <property type="evidence" value="ECO:0007669"/>
    <property type="project" value="InterPro"/>
</dbReference>
<dbReference type="GO" id="GO:0007018">
    <property type="term" value="P:microtubule-based movement"/>
    <property type="evidence" value="ECO:0007669"/>
    <property type="project" value="InterPro"/>
</dbReference>
<dbReference type="GO" id="GO:0000278">
    <property type="term" value="P:mitotic cell cycle"/>
    <property type="evidence" value="ECO:0007669"/>
    <property type="project" value="TreeGrafter"/>
</dbReference>
<dbReference type="CDD" id="cd01371">
    <property type="entry name" value="KISc_KIF3"/>
    <property type="match status" value="1"/>
</dbReference>
<dbReference type="Gene3D" id="3.40.850.10">
    <property type="entry name" value="Kinesin motor domain"/>
    <property type="match status" value="1"/>
</dbReference>
<dbReference type="InterPro" id="IPR027640">
    <property type="entry name" value="Kinesin-like_fam"/>
</dbReference>
<dbReference type="InterPro" id="IPR019821">
    <property type="entry name" value="Kinesin_motor_CS"/>
</dbReference>
<dbReference type="InterPro" id="IPR001752">
    <property type="entry name" value="Kinesin_motor_dom"/>
</dbReference>
<dbReference type="InterPro" id="IPR036961">
    <property type="entry name" value="Kinesin_motor_dom_sf"/>
</dbReference>
<dbReference type="InterPro" id="IPR027417">
    <property type="entry name" value="P-loop_NTPase"/>
</dbReference>
<dbReference type="PANTHER" id="PTHR47968">
    <property type="entry name" value="CENTROMERE PROTEIN E"/>
    <property type="match status" value="1"/>
</dbReference>
<dbReference type="PANTHER" id="PTHR47968:SF76">
    <property type="entry name" value="KINESIN-LIKE PROTEIN"/>
    <property type="match status" value="1"/>
</dbReference>
<dbReference type="Pfam" id="PF00225">
    <property type="entry name" value="Kinesin"/>
    <property type="match status" value="2"/>
</dbReference>
<dbReference type="PRINTS" id="PR00380">
    <property type="entry name" value="KINESINHEAVY"/>
</dbReference>
<dbReference type="SMART" id="SM00129">
    <property type="entry name" value="KISc"/>
    <property type="match status" value="1"/>
</dbReference>
<dbReference type="SUPFAM" id="SSF52540">
    <property type="entry name" value="P-loop containing nucleoside triphosphate hydrolases"/>
    <property type="match status" value="1"/>
</dbReference>
<dbReference type="PROSITE" id="PS00411">
    <property type="entry name" value="KINESIN_MOTOR_1"/>
    <property type="match status" value="1"/>
</dbReference>
<dbReference type="PROSITE" id="PS50067">
    <property type="entry name" value="KINESIN_MOTOR_2"/>
    <property type="match status" value="1"/>
</dbReference>
<name>KIF3C_PONAB</name>
<feature type="chain" id="PRO_0000262924" description="Kinesin-like protein KIF3C">
    <location>
        <begin position="1"/>
        <end position="793"/>
    </location>
</feature>
<feature type="domain" description="Kinesin motor" evidence="3">
    <location>
        <begin position="10"/>
        <end position="365"/>
    </location>
</feature>
<feature type="region of interest" description="Disordered" evidence="4">
    <location>
        <begin position="251"/>
        <end position="288"/>
    </location>
</feature>
<feature type="region of interest" description="Disordered" evidence="4">
    <location>
        <begin position="395"/>
        <end position="423"/>
    </location>
</feature>
<feature type="region of interest" description="Globular" evidence="2">
    <location>
        <begin position="631"/>
        <end position="793"/>
    </location>
</feature>
<feature type="region of interest" description="Disordered" evidence="4">
    <location>
        <begin position="756"/>
        <end position="793"/>
    </location>
</feature>
<feature type="coiled-coil region" evidence="2">
    <location>
        <begin position="376"/>
        <end position="630"/>
    </location>
</feature>
<feature type="compositionally biased region" description="Gly residues" evidence="4">
    <location>
        <begin position="270"/>
        <end position="284"/>
    </location>
</feature>
<feature type="compositionally biased region" description="Basic residues" evidence="4">
    <location>
        <begin position="399"/>
        <end position="413"/>
    </location>
</feature>
<feature type="binding site" evidence="3">
    <location>
        <begin position="97"/>
        <end position="104"/>
    </location>
    <ligand>
        <name>ATP</name>
        <dbReference type="ChEBI" id="CHEBI:30616"/>
    </ligand>
</feature>
<evidence type="ECO:0000250" key="1"/>
<evidence type="ECO:0000255" key="2"/>
<evidence type="ECO:0000255" key="3">
    <source>
        <dbReference type="PROSITE-ProRule" id="PRU00283"/>
    </source>
</evidence>
<evidence type="ECO:0000256" key="4">
    <source>
        <dbReference type="SAM" id="MobiDB-lite"/>
    </source>
</evidence>
<evidence type="ECO:0000305" key="5"/>
<protein>
    <recommendedName>
        <fullName>Kinesin-like protein KIF3C</fullName>
    </recommendedName>
</protein>
<accession>Q5R706</accession>
<sequence length="793" mass="89515">MASKTKASEALKVVARCRPLSRKEEAAGHEQILTMDVKLGQVTLRNPRAAPGELPKTFTFDAVYDASSKQADLYDETVRPLIDSVLQGFNGTVFAYGQTGTGKTYTMQGTWVEPELRGVIPNAFEHIFTHISRSQNQQYLVRASYLEIYQEEIRDLLSKEPGKRLELKENPETGVYIKDLSSFVTKNVKEIEHVMNLGNQTRAVGSTHMNEVSSRSHAIFIITVECSERGSDGQDHIRVGKLNLVDLAGSERQNKAGPNTAGGASTPSSGGSGGGGGSGGGAGGERPKEASKINLSLSALGNVIAALAGNRSTHIPYRDSKLTRLLQDSLGGNAKTIMVATLGPASHSYDESLSTLRFANRAKNIKNKPRVNEDPKDTLLREFQEEIARLKAQLEKRGMLGKRPRRKSSRGKKAVSAPPGYPESPVIEAWVAEEEDDNNNNHRPPQPILESALEKNMENYLQEQKERLEEEKAAIQDDRSLVSEEKQKLLEEKEKMLEKDLRREQQATELLAAKYKAMESKLLIGGRNIMDHTNEQQKMLELKRQEIAEQKRREREMQQEMMLRDEETMELRGTYTSLQQEVEVKTKKLKKLYAKLQAVKAEIQDQHDEYIRVRQDLEEAQNEQTRELKLKYLIIENFIPPEEKNKIMNRLFLDCEEEQWKFQPLVPAGVNSQMKKRPTSAVGYKRPISQYARVAMAMGSHPRYRAENIMFLELDVSPPAVFEMEFSHDQEQDPRALHMERLMRLDSFLERLSTSKVRKSRSWCQSPQRPPPSTTHASLASASLRPATVADHE</sequence>